<accession>Q31HD5</accession>
<sequence length="90" mass="9675">MKIYKVDKTLVSTNRIAMMEHKPLLVVREKDGGTPQVAVDPVGCKPGDWVICCGSSAARDATGVKGYPSDLTIVGIIDKWEVPQDADTTS</sequence>
<proteinExistence type="evidence at protein level"/>
<name>CSS4A_HYDCU</name>
<dbReference type="EMBL" id="CP000109">
    <property type="protein sequence ID" value="ABB41438.1"/>
    <property type="molecule type" value="Genomic_DNA"/>
</dbReference>
<dbReference type="SMR" id="Q31HD5"/>
<dbReference type="STRING" id="317025.Tcr_0842"/>
<dbReference type="KEGG" id="tcx:Tcr_0842"/>
<dbReference type="eggNOG" id="COG4576">
    <property type="taxonomic scope" value="Bacteria"/>
</dbReference>
<dbReference type="HOGENOM" id="CLU_148498_1_0_6"/>
<dbReference type="OrthoDB" id="540628at2"/>
<dbReference type="GO" id="GO:0031470">
    <property type="term" value="C:carboxysome"/>
    <property type="evidence" value="ECO:0007669"/>
    <property type="project" value="UniProtKB-SubCell"/>
</dbReference>
<dbReference type="GO" id="GO:0015977">
    <property type="term" value="P:carbon fixation"/>
    <property type="evidence" value="ECO:0007669"/>
    <property type="project" value="UniProtKB-KW"/>
</dbReference>
<dbReference type="CDD" id="cd01614">
    <property type="entry name" value="EutN_CcmL"/>
    <property type="match status" value="1"/>
</dbReference>
<dbReference type="Gene3D" id="2.40.50.220">
    <property type="entry name" value="EutN/Ccml"/>
    <property type="match status" value="1"/>
</dbReference>
<dbReference type="InterPro" id="IPR014076">
    <property type="entry name" value="CsoS4A"/>
</dbReference>
<dbReference type="InterPro" id="IPR004992">
    <property type="entry name" value="EutN_CcmL"/>
</dbReference>
<dbReference type="InterPro" id="IPR036677">
    <property type="entry name" value="EutN_CcmL_sf"/>
</dbReference>
<dbReference type="NCBIfam" id="TIGR02703">
    <property type="entry name" value="carboxysome_A"/>
    <property type="match status" value="1"/>
</dbReference>
<dbReference type="PANTHER" id="PTHR36539:SF1">
    <property type="entry name" value="BACTERIAL MICROCOMPARTMENT SHELL VERTEX PROTEIN EUTN"/>
    <property type="match status" value="1"/>
</dbReference>
<dbReference type="PANTHER" id="PTHR36539">
    <property type="entry name" value="ETHANOLAMINE UTILIZATION PROTEIN EUTN"/>
    <property type="match status" value="1"/>
</dbReference>
<dbReference type="Pfam" id="PF03319">
    <property type="entry name" value="EutN_CcmL"/>
    <property type="match status" value="1"/>
</dbReference>
<dbReference type="SUPFAM" id="SSF159133">
    <property type="entry name" value="EutN/CcmL-like"/>
    <property type="match status" value="1"/>
</dbReference>
<dbReference type="PROSITE" id="PS51932">
    <property type="entry name" value="BMV"/>
    <property type="match status" value="1"/>
</dbReference>
<evidence type="ECO:0000250" key="1">
    <source>
        <dbReference type="UniProtKB" id="O85043"/>
    </source>
</evidence>
<evidence type="ECO:0000255" key="2">
    <source>
        <dbReference type="PROSITE-ProRule" id="PRU01280"/>
    </source>
</evidence>
<evidence type="ECO:0000269" key="3">
    <source>
    </source>
</evidence>
<evidence type="ECO:0000303" key="4">
    <source>
    </source>
</evidence>
<evidence type="ECO:0000305" key="5"/>
<evidence type="ECO:0000305" key="6">
    <source>
    </source>
</evidence>
<reference key="1">
    <citation type="journal article" date="2006" name="PLoS Biol.">
        <title>The genome of deep-sea vent chemolithoautotroph Thiomicrospira crunogena XCL-2.</title>
        <authorList>
            <person name="Scott K.M."/>
            <person name="Sievert S.M."/>
            <person name="Abril F.N."/>
            <person name="Ball L.A."/>
            <person name="Barrett C.J."/>
            <person name="Blake R.A."/>
            <person name="Boller A.J."/>
            <person name="Chain P.S.G."/>
            <person name="Clark J.A."/>
            <person name="Davis C.R."/>
            <person name="Detter C."/>
            <person name="Do K.F."/>
            <person name="Dobrinski K.P."/>
            <person name="Faza B.I."/>
            <person name="Fitzpatrick K.A."/>
            <person name="Freyermuth S.K."/>
            <person name="Harmer T.L."/>
            <person name="Hauser L.J."/>
            <person name="Huegler M."/>
            <person name="Kerfeld C.A."/>
            <person name="Klotz M.G."/>
            <person name="Kong W.W."/>
            <person name="Land M."/>
            <person name="Lapidus A."/>
            <person name="Larimer F.W."/>
            <person name="Longo D.L."/>
            <person name="Lucas S."/>
            <person name="Malfatti S.A."/>
            <person name="Massey S.E."/>
            <person name="Martin D.D."/>
            <person name="McCuddin Z."/>
            <person name="Meyer F."/>
            <person name="Moore J.L."/>
            <person name="Ocampo L.H. Jr."/>
            <person name="Paul J.H."/>
            <person name="Paulsen I.T."/>
            <person name="Reep D.K."/>
            <person name="Ren Q."/>
            <person name="Ross R.L."/>
            <person name="Sato P.Y."/>
            <person name="Thomas P."/>
            <person name="Tinkham L.E."/>
            <person name="Zeruth G.T."/>
        </authorList>
    </citation>
    <scope>NUCLEOTIDE SEQUENCE [LARGE SCALE GENOMIC DNA]</scope>
    <source>
        <strain>DSM 25203 / XCL-2</strain>
    </source>
</reference>
<reference key="2">
    <citation type="journal article" date="2017" name="J. Bacteriol.">
        <title>Proteomic and Mutant Analysis of the CO2 Concentrating Mechanism of Hydrothermal Vent Chemolithoautotroph Thiomicrospira crunogena.</title>
        <authorList>
            <consortium name="USF MCB4404L"/>
            <person name="Mangiapia M."/>
            <person name="Brown T.W."/>
            <person name="Chaput D."/>
            <person name="Haller E."/>
            <person name="Harmer T.L."/>
            <person name="Hashemy Z."/>
            <person name="Keeley R."/>
            <person name="Leonard J."/>
            <person name="Mancera P."/>
            <person name="Nicholson D."/>
            <person name="Stevens S."/>
            <person name="Wanjugi P."/>
            <person name="Zabinski T."/>
            <person name="Pan C."/>
            <person name="Scott K.M."/>
        </authorList>
    </citation>
    <scope>SUBCELLULAR LOCATION</scope>
    <scope>INDUCTION</scope>
    <source>
        <strain>DSM 25203 / XCL-2</strain>
    </source>
</reference>
<feature type="chain" id="PRO_0000452080" description="Carboxysome shell vertex protein CsoS4A">
    <location>
        <begin position="1"/>
        <end position="90"/>
    </location>
</feature>
<feature type="domain" description="BMV" evidence="2">
    <location>
        <begin position="1"/>
        <end position="78"/>
    </location>
</feature>
<gene>
    <name evidence="4" type="primary">csoS4A</name>
    <name type="ordered locus">Tcr_0842</name>
</gene>
<comment type="function">
    <text evidence="1">Probably forms vertices in the carboxysome, a polyhedral inclusion where RuBisCO (ribulose bisphosphate carboxylase, cbbL-cbbS) is sequestered. Has been modeled to induce curvature upon insertion into an otherwise flat hexagonal layer of major carboxysome subunits.</text>
</comment>
<comment type="subunit">
    <text evidence="1">Homopentamer.</text>
</comment>
<comment type="subcellular location">
    <subcellularLocation>
        <location evidence="6">Carboxysome</location>
    </subcellularLocation>
    <text evidence="5">This bacterium makes alpha-type carboxysomes.</text>
</comment>
<comment type="induction">
    <text evidence="3">Induced by growth in low levels of dissolved inorganic carbon (at protein level).</text>
</comment>
<comment type="domain">
    <text evidence="1">The tight homopentamer forms a pore with an opening of about 3.5 Angstroms in diameter which is positively charged.</text>
</comment>
<comment type="similarity">
    <text evidence="5">Belongs to the CcmL/EutN family. CsoS4 subfamily.</text>
</comment>
<organism>
    <name type="scientific">Hydrogenovibrio crunogenus (strain DSM 25203 / XCL-2)</name>
    <name type="common">Thiomicrospira crunogena</name>
    <dbReference type="NCBI Taxonomy" id="317025"/>
    <lineage>
        <taxon>Bacteria</taxon>
        <taxon>Pseudomonadati</taxon>
        <taxon>Pseudomonadota</taxon>
        <taxon>Gammaproteobacteria</taxon>
        <taxon>Thiotrichales</taxon>
        <taxon>Piscirickettsiaceae</taxon>
        <taxon>Hydrogenovibrio</taxon>
    </lineage>
</organism>
<keyword id="KW-1283">Bacterial microcompartment</keyword>
<keyword id="KW-0120">Carbon dioxide fixation</keyword>
<keyword id="KW-1282">Carboxysome</keyword>
<protein>
    <recommendedName>
        <fullName>Carboxysome shell vertex protein CsoS4A</fullName>
    </recommendedName>
</protein>